<keyword id="KW-0050">Antiport</keyword>
<keyword id="KW-0997">Cell inner membrane</keyword>
<keyword id="KW-1003">Cell membrane</keyword>
<keyword id="KW-0406">Ion transport</keyword>
<keyword id="KW-0472">Membrane</keyword>
<keyword id="KW-0915">Sodium</keyword>
<keyword id="KW-0739">Sodium transport</keyword>
<keyword id="KW-0812">Transmembrane</keyword>
<keyword id="KW-1133">Transmembrane helix</keyword>
<keyword id="KW-0813">Transport</keyword>
<evidence type="ECO:0000255" key="1">
    <source>
        <dbReference type="HAMAP-Rule" id="MF_01844"/>
    </source>
</evidence>
<sequence>MSDMIRDFFKMESAGGILLVIAAAIAMVIANSAMGEGYQAFLHTYVFGMSVSHWINDGLMAVFFLLIGLEVKRELLEGALKSRETAIFPAIAAVGGMLAPALIYVAFNFNDPAAIQGWAIPAATDIAFALGIMALLGKRVPVSLKVFLLALAIIDDLGVVVIIALFYSSDLSTIALTIGFIMTGVLFMLNAKHVTKLSIYLVAGLILWIAVLKSGVHATLAGVVIGFAIPLKGNKGEHSPLKHLEHALHPYVAFAILPVFAFANAGISLQGVSLAGLTSMLPLGVALGLFLGKPLGIFSFSWAAVKLGVAKLPEGINFKHIFAVSVLCGIGFTMSIFISSLAFGQANEAYDTYARLGILMGSTTAALLGYSLLRLSLPLKKA</sequence>
<accession>A5F7R1</accession>
<accession>C3M129</accession>
<proteinExistence type="inferred from homology"/>
<protein>
    <recommendedName>
        <fullName evidence="1">Na(+)/H(+) antiporter NhaA</fullName>
    </recommendedName>
    <alternativeName>
        <fullName evidence="1">Sodium/proton antiporter NhaA</fullName>
    </alternativeName>
</protein>
<dbReference type="EMBL" id="CP000627">
    <property type="protein sequence ID" value="ABQ20641.1"/>
    <property type="molecule type" value="Genomic_DNA"/>
</dbReference>
<dbReference type="EMBL" id="CP001235">
    <property type="protein sequence ID" value="ACP09745.1"/>
    <property type="molecule type" value="Genomic_DNA"/>
</dbReference>
<dbReference type="RefSeq" id="WP_001281946.1">
    <property type="nucleotide sequence ID" value="NZ_JAACZH010000011.1"/>
</dbReference>
<dbReference type="SMR" id="A5F7R1"/>
<dbReference type="KEGG" id="vco:VC0395_A1233"/>
<dbReference type="KEGG" id="vcr:VC395_1744"/>
<dbReference type="PATRIC" id="fig|345073.21.peg.1689"/>
<dbReference type="eggNOG" id="COG3004">
    <property type="taxonomic scope" value="Bacteria"/>
</dbReference>
<dbReference type="HOGENOM" id="CLU_015803_1_0_6"/>
<dbReference type="OrthoDB" id="9808135at2"/>
<dbReference type="Proteomes" id="UP000000249">
    <property type="component" value="Chromosome 2"/>
</dbReference>
<dbReference type="GO" id="GO:0005886">
    <property type="term" value="C:plasma membrane"/>
    <property type="evidence" value="ECO:0007669"/>
    <property type="project" value="UniProtKB-SubCell"/>
</dbReference>
<dbReference type="GO" id="GO:0015385">
    <property type="term" value="F:sodium:proton antiporter activity"/>
    <property type="evidence" value="ECO:0007669"/>
    <property type="project" value="TreeGrafter"/>
</dbReference>
<dbReference type="GO" id="GO:0006885">
    <property type="term" value="P:regulation of pH"/>
    <property type="evidence" value="ECO:0007669"/>
    <property type="project" value="InterPro"/>
</dbReference>
<dbReference type="Gene3D" id="1.20.1530.10">
    <property type="entry name" value="Na+/H+ antiporter like domain"/>
    <property type="match status" value="1"/>
</dbReference>
<dbReference type="HAMAP" id="MF_01844">
    <property type="entry name" value="NhaA"/>
    <property type="match status" value="1"/>
</dbReference>
<dbReference type="InterPro" id="IPR023171">
    <property type="entry name" value="Na/H_antiporter_dom_sf"/>
</dbReference>
<dbReference type="InterPro" id="IPR004670">
    <property type="entry name" value="NhaA"/>
</dbReference>
<dbReference type="NCBIfam" id="TIGR00773">
    <property type="entry name" value="NhaA"/>
    <property type="match status" value="1"/>
</dbReference>
<dbReference type="NCBIfam" id="NF007111">
    <property type="entry name" value="PRK09560.1"/>
    <property type="match status" value="1"/>
</dbReference>
<dbReference type="NCBIfam" id="NF007112">
    <property type="entry name" value="PRK09561.1"/>
    <property type="match status" value="1"/>
</dbReference>
<dbReference type="PANTHER" id="PTHR30341:SF0">
    <property type="entry name" value="NA(+)_H(+) ANTIPORTER NHAA"/>
    <property type="match status" value="1"/>
</dbReference>
<dbReference type="PANTHER" id="PTHR30341">
    <property type="entry name" value="SODIUM ION/PROTON ANTIPORTER NHAA-RELATED"/>
    <property type="match status" value="1"/>
</dbReference>
<dbReference type="Pfam" id="PF06965">
    <property type="entry name" value="Na_H_antiport_1"/>
    <property type="match status" value="1"/>
</dbReference>
<reference key="1">
    <citation type="submission" date="2007-03" db="EMBL/GenBank/DDBJ databases">
        <authorList>
            <person name="Heidelberg J."/>
        </authorList>
    </citation>
    <scope>NUCLEOTIDE SEQUENCE [LARGE SCALE GENOMIC DNA]</scope>
    <source>
        <strain>ATCC 39541 / Classical Ogawa 395 / O395</strain>
    </source>
</reference>
<reference key="2">
    <citation type="journal article" date="2008" name="PLoS ONE">
        <title>A recalibrated molecular clock and independent origins for the cholera pandemic clones.</title>
        <authorList>
            <person name="Feng L."/>
            <person name="Reeves P.R."/>
            <person name="Lan R."/>
            <person name="Ren Y."/>
            <person name="Gao C."/>
            <person name="Zhou Z."/>
            <person name="Ren Y."/>
            <person name="Cheng J."/>
            <person name="Wang W."/>
            <person name="Wang J."/>
            <person name="Qian W."/>
            <person name="Li D."/>
            <person name="Wang L."/>
        </authorList>
    </citation>
    <scope>NUCLEOTIDE SEQUENCE [LARGE SCALE GENOMIC DNA]</scope>
    <source>
        <strain>ATCC 39541 / Classical Ogawa 395 / O395</strain>
    </source>
</reference>
<gene>
    <name evidence="1" type="primary">nhaA</name>
    <name type="ordered locus">VC0395_A1233</name>
    <name type="ordered locus">VC395_1744</name>
</gene>
<organism>
    <name type="scientific">Vibrio cholerae serotype O1 (strain ATCC 39541 / Classical Ogawa 395 / O395)</name>
    <dbReference type="NCBI Taxonomy" id="345073"/>
    <lineage>
        <taxon>Bacteria</taxon>
        <taxon>Pseudomonadati</taxon>
        <taxon>Pseudomonadota</taxon>
        <taxon>Gammaproteobacteria</taxon>
        <taxon>Vibrionales</taxon>
        <taxon>Vibrionaceae</taxon>
        <taxon>Vibrio</taxon>
    </lineage>
</organism>
<name>NHAA_VIBC3</name>
<feature type="chain" id="PRO_0000334457" description="Na(+)/H(+) antiporter NhaA">
    <location>
        <begin position="1"/>
        <end position="382"/>
    </location>
</feature>
<feature type="transmembrane region" description="Helical" evidence="1">
    <location>
        <begin position="14"/>
        <end position="34"/>
    </location>
</feature>
<feature type="transmembrane region" description="Helical" evidence="1">
    <location>
        <begin position="47"/>
        <end position="67"/>
    </location>
</feature>
<feature type="transmembrane region" description="Helical" evidence="1">
    <location>
        <begin position="87"/>
        <end position="107"/>
    </location>
</feature>
<feature type="transmembrane region" description="Helical" evidence="1">
    <location>
        <begin position="117"/>
        <end position="137"/>
    </location>
</feature>
<feature type="transmembrane region" description="Helical" evidence="1">
    <location>
        <begin position="146"/>
        <end position="166"/>
    </location>
</feature>
<feature type="transmembrane region" description="Helical" evidence="1">
    <location>
        <begin position="171"/>
        <end position="191"/>
    </location>
</feature>
<feature type="transmembrane region" description="Helical" evidence="1">
    <location>
        <begin position="205"/>
        <end position="225"/>
    </location>
</feature>
<feature type="transmembrane region" description="Helical" evidence="1">
    <location>
        <begin position="247"/>
        <end position="267"/>
    </location>
</feature>
<feature type="transmembrane region" description="Helical" evidence="1">
    <location>
        <begin position="271"/>
        <end position="291"/>
    </location>
</feature>
<feature type="transmembrane region" description="Helical" evidence="1">
    <location>
        <begin position="321"/>
        <end position="341"/>
    </location>
</feature>
<feature type="transmembrane region" description="Helical" evidence="1">
    <location>
        <begin position="353"/>
        <end position="373"/>
    </location>
</feature>
<comment type="function">
    <text evidence="1">Na(+)/H(+) antiporter that extrudes sodium in exchange for external protons.</text>
</comment>
<comment type="catalytic activity">
    <reaction evidence="1">
        <text>Na(+)(in) + 2 H(+)(out) = Na(+)(out) + 2 H(+)(in)</text>
        <dbReference type="Rhea" id="RHEA:29251"/>
        <dbReference type="ChEBI" id="CHEBI:15378"/>
        <dbReference type="ChEBI" id="CHEBI:29101"/>
    </reaction>
    <physiologicalReaction direction="left-to-right" evidence="1">
        <dbReference type="Rhea" id="RHEA:29252"/>
    </physiologicalReaction>
</comment>
<comment type="subcellular location">
    <subcellularLocation>
        <location evidence="1">Cell inner membrane</location>
        <topology evidence="1">Multi-pass membrane protein</topology>
    </subcellularLocation>
</comment>
<comment type="similarity">
    <text evidence="1">Belongs to the NhaA Na(+)/H(+) (TC 2.A.33) antiporter family.</text>
</comment>